<keyword id="KW-0025">Alternative splicing</keyword>
<keyword id="KW-0127">Catecholamine biosynthesis</keyword>
<keyword id="KW-0210">Decarboxylase</keyword>
<keyword id="KW-0456">Lyase</keyword>
<keyword id="KW-0597">Phosphoprotein</keyword>
<keyword id="KW-0663">Pyridoxal phosphate</keyword>
<keyword id="KW-1185">Reference proteome</keyword>
<name>DCHS_RAT</name>
<feature type="chain" id="PRO_0000146952" description="Histidine decarboxylase">
    <location>
        <begin position="1"/>
        <end position="656"/>
    </location>
</feature>
<feature type="region of interest" description="Disordered" evidence="3">
    <location>
        <begin position="481"/>
        <end position="502"/>
    </location>
</feature>
<feature type="binding site" evidence="1">
    <location>
        <position position="84"/>
    </location>
    <ligand>
        <name>substrate</name>
    </ligand>
</feature>
<feature type="binding site" evidence="1">
    <location>
        <position position="197"/>
    </location>
    <ligand>
        <name>substrate</name>
    </ligand>
</feature>
<feature type="modified residue" description="N6-(pyridoxal phosphate)lysine" evidence="1">
    <location>
        <position position="308"/>
    </location>
</feature>
<feature type="modified residue" description="Phosphoserine; by PKA" evidence="2">
    <location>
        <position position="343"/>
    </location>
</feature>
<feature type="modified residue" description="Phosphoserine; by PKA" evidence="2">
    <location>
        <position position="362"/>
    </location>
</feature>
<feature type="sequence variant">
    <original>H</original>
    <variation>R</variation>
    <location>
        <position position="8"/>
    </location>
</feature>
<feature type="sequence variant">
    <original>V</original>
    <variation>L</variation>
    <location>
        <position position="28"/>
    </location>
</feature>
<feature type="sequence variant">
    <original>R</original>
    <variation>C</variation>
    <location>
        <position position="286"/>
    </location>
</feature>
<dbReference type="EC" id="4.1.1.22"/>
<dbReference type="EMBL" id="M29591">
    <property type="protein sequence ID" value="AAA41326.1"/>
    <property type="molecule type" value="mRNA"/>
</dbReference>
<dbReference type="EMBL" id="M38759">
    <property type="protein sequence ID" value="AAA63476.1"/>
    <property type="status" value="ALT_INIT"/>
    <property type="molecule type" value="mRNA"/>
</dbReference>
<dbReference type="PIR" id="A34890">
    <property type="entry name" value="A34890"/>
</dbReference>
<dbReference type="PIR" id="A39030">
    <property type="entry name" value="A39030"/>
</dbReference>
<dbReference type="SMR" id="P16453"/>
<dbReference type="FunCoup" id="P16453">
    <property type="interactions" value="23"/>
</dbReference>
<dbReference type="STRING" id="10116.ENSRNOP00000041885"/>
<dbReference type="BindingDB" id="P16453"/>
<dbReference type="ChEMBL" id="CHEMBL3243911"/>
<dbReference type="PhosphoSitePlus" id="P16453"/>
<dbReference type="PaxDb" id="10116-ENSRNOP00000041885"/>
<dbReference type="UCSC" id="RGD:2790">
    <molecule id="P16453-1"/>
    <property type="organism name" value="rat"/>
</dbReference>
<dbReference type="AGR" id="RGD:2790"/>
<dbReference type="RGD" id="2790">
    <property type="gene designation" value="Hdc"/>
</dbReference>
<dbReference type="eggNOG" id="KOG0628">
    <property type="taxonomic scope" value="Eukaryota"/>
</dbReference>
<dbReference type="InParanoid" id="P16453"/>
<dbReference type="PhylomeDB" id="P16453"/>
<dbReference type="BioCyc" id="MetaCyc:MONOMER-14635"/>
<dbReference type="Reactome" id="R-RNO-70921">
    <property type="pathway name" value="Histidine catabolism"/>
</dbReference>
<dbReference type="SABIO-RK" id="P16453"/>
<dbReference type="UniPathway" id="UPA00822">
    <property type="reaction ID" value="UER00786"/>
</dbReference>
<dbReference type="PRO" id="PR:P16453"/>
<dbReference type="Proteomes" id="UP000002494">
    <property type="component" value="Unplaced"/>
</dbReference>
<dbReference type="GO" id="GO:0005737">
    <property type="term" value="C:cytoplasm"/>
    <property type="evidence" value="ECO:0000318"/>
    <property type="project" value="GO_Central"/>
</dbReference>
<dbReference type="GO" id="GO:0030425">
    <property type="term" value="C:dendrite"/>
    <property type="evidence" value="ECO:0000314"/>
    <property type="project" value="RGD"/>
</dbReference>
<dbReference type="GO" id="GO:0043025">
    <property type="term" value="C:neuronal cell body"/>
    <property type="evidence" value="ECO:0000314"/>
    <property type="project" value="RGD"/>
</dbReference>
<dbReference type="GO" id="GO:0016597">
    <property type="term" value="F:amino acid binding"/>
    <property type="evidence" value="ECO:0000314"/>
    <property type="project" value="RGD"/>
</dbReference>
<dbReference type="GO" id="GO:0004398">
    <property type="term" value="F:histidine decarboxylase activity"/>
    <property type="evidence" value="ECO:0000314"/>
    <property type="project" value="RGD"/>
</dbReference>
<dbReference type="GO" id="GO:0042802">
    <property type="term" value="F:identical protein binding"/>
    <property type="evidence" value="ECO:0000353"/>
    <property type="project" value="RGD"/>
</dbReference>
<dbReference type="GO" id="GO:0030170">
    <property type="term" value="F:pyridoxal phosphate binding"/>
    <property type="evidence" value="ECO:0000314"/>
    <property type="project" value="RGD"/>
</dbReference>
<dbReference type="GO" id="GO:0042423">
    <property type="term" value="P:catecholamine biosynthetic process"/>
    <property type="evidence" value="ECO:0007669"/>
    <property type="project" value="UniProtKB-KW"/>
</dbReference>
<dbReference type="GO" id="GO:0001694">
    <property type="term" value="P:histamine biosynthetic process"/>
    <property type="evidence" value="ECO:0000266"/>
    <property type="project" value="RGD"/>
</dbReference>
<dbReference type="GO" id="GO:0001692">
    <property type="term" value="P:histamine metabolic process"/>
    <property type="evidence" value="ECO:0000314"/>
    <property type="project" value="RGD"/>
</dbReference>
<dbReference type="GO" id="GO:0006548">
    <property type="term" value="P:L-histidine catabolic process"/>
    <property type="evidence" value="ECO:0000266"/>
    <property type="project" value="RGD"/>
</dbReference>
<dbReference type="GO" id="GO:0006547">
    <property type="term" value="P:L-histidine metabolic process"/>
    <property type="evidence" value="ECO:0000314"/>
    <property type="project" value="RGD"/>
</dbReference>
<dbReference type="CDD" id="cd06450">
    <property type="entry name" value="DOPA_deC_like"/>
    <property type="match status" value="1"/>
</dbReference>
<dbReference type="FunFam" id="1.20.1340.10:FF:000001">
    <property type="entry name" value="Histidine decarboxylase"/>
    <property type="match status" value="1"/>
</dbReference>
<dbReference type="FunFam" id="3.40.640.10:FF:000025">
    <property type="entry name" value="Histidine decarboxylase"/>
    <property type="match status" value="1"/>
</dbReference>
<dbReference type="FunFam" id="3.90.1150.10:FF:000018">
    <property type="entry name" value="Histidine decarboxylase"/>
    <property type="match status" value="1"/>
</dbReference>
<dbReference type="Gene3D" id="3.90.1150.10">
    <property type="entry name" value="Aspartate Aminotransferase, domain 1"/>
    <property type="match status" value="1"/>
</dbReference>
<dbReference type="Gene3D" id="1.20.1340.10">
    <property type="entry name" value="dopa decarboxylase, N-terminal domain"/>
    <property type="match status" value="1"/>
</dbReference>
<dbReference type="Gene3D" id="3.40.640.10">
    <property type="entry name" value="Type I PLP-dependent aspartate aminotransferase-like (Major domain)"/>
    <property type="match status" value="1"/>
</dbReference>
<dbReference type="InterPro" id="IPR010977">
    <property type="entry name" value="Aromatic_deC"/>
</dbReference>
<dbReference type="InterPro" id="IPR002129">
    <property type="entry name" value="PyrdxlP-dep_de-COase"/>
</dbReference>
<dbReference type="InterPro" id="IPR015424">
    <property type="entry name" value="PyrdxlP-dep_Trfase"/>
</dbReference>
<dbReference type="InterPro" id="IPR015421">
    <property type="entry name" value="PyrdxlP-dep_Trfase_major"/>
</dbReference>
<dbReference type="InterPro" id="IPR015422">
    <property type="entry name" value="PyrdxlP-dep_Trfase_small"/>
</dbReference>
<dbReference type="InterPro" id="IPR021115">
    <property type="entry name" value="Pyridoxal-P_BS"/>
</dbReference>
<dbReference type="PANTHER" id="PTHR11999">
    <property type="entry name" value="GROUP II PYRIDOXAL-5-PHOSPHATE DECARBOXYLASE"/>
    <property type="match status" value="1"/>
</dbReference>
<dbReference type="PANTHER" id="PTHR11999:SF68">
    <property type="entry name" value="HISTIDINE DECARBOXYLASE"/>
    <property type="match status" value="1"/>
</dbReference>
<dbReference type="Pfam" id="PF00282">
    <property type="entry name" value="Pyridoxal_deC"/>
    <property type="match status" value="1"/>
</dbReference>
<dbReference type="PRINTS" id="PR00800">
    <property type="entry name" value="YHDCRBOXLASE"/>
</dbReference>
<dbReference type="SUPFAM" id="SSF53383">
    <property type="entry name" value="PLP-dependent transferases"/>
    <property type="match status" value="1"/>
</dbReference>
<dbReference type="PROSITE" id="PS00392">
    <property type="entry name" value="DDC_GAD_HDC_YDC"/>
    <property type="match status" value="1"/>
</dbReference>
<reference key="1">
    <citation type="journal article" date="1990" name="Proc. Natl. Acad. Sci. U.S.A.">
        <title>Characterization and expression of the complementary DNA encoding rat histidine decarboxylase.</title>
        <authorList>
            <person name="Joseph D.R."/>
            <person name="Sullivan P.M."/>
            <person name="Wang Y.-M."/>
            <person name="Kozak C."/>
            <person name="Fenstermacher D.A."/>
            <person name="Behrendsen M.E."/>
            <person name="Zahnow C.A."/>
        </authorList>
    </citation>
    <scope>NUCLEOTIDE SEQUENCE [MRNA]</scope>
    <source>
        <strain>Sprague-Dawley</strain>
        <tissue>Fetal liver</tissue>
    </source>
</reference>
<reference key="2">
    <citation type="journal article" date="1990" name="Proc. Natl. Acad. Sci. U.S.A.">
        <title>Characterization and expression of the complementary DNA encoding rat histidine decarboxylase.</title>
        <authorList>
            <person name="Joseph D.R."/>
            <person name="Sullivan P.M."/>
            <person name="Wang Y.-M."/>
            <person name="Kozak C."/>
            <person name="Fenstermacher D.A."/>
            <person name="Behrendsen M.E."/>
            <person name="Zahnow C.A."/>
        </authorList>
    </citation>
    <scope>SEQUENCE REVISION</scope>
</reference>
<reference key="3">
    <citation type="journal article" date="1991" name="J. Biol. Chem.">
        <title>Alternative processing of androgen-binding protein RNA transcripts in fetal rat liver. Identification of a transcript formed by trans splicing.</title>
        <authorList>
            <person name="Sullivan P.M."/>
            <person name="Petrusz P."/>
            <person name="Szpirer C."/>
            <person name="Joseph D.R."/>
        </authorList>
    </citation>
    <scope>NUCLEOTIDE SEQUENCE [MRNA] OF 240-656</scope>
    <source>
        <strain>Sprague-Dawley</strain>
        <tissue>Fetal liver</tissue>
    </source>
</reference>
<evidence type="ECO:0000250" key="1"/>
<evidence type="ECO:0000255" key="2"/>
<evidence type="ECO:0000256" key="3">
    <source>
        <dbReference type="SAM" id="MobiDB-lite"/>
    </source>
</evidence>
<evidence type="ECO:0000305" key="4"/>
<sequence length="656" mass="73636">MMEPSEYHEYQARGKEMVDYICQYLSTVRERQVTPNVKPGYLRAQIPSSAPEEPDSWDSIFGDIEQIIMPGVVHWQSPHMHAYYPALTSWPSLLGDMLADAINCLGFTWASSPACTELEMNIMDWLAKMLGLPDFFLHHHPSSQGGGVLQRTVSESTLIALLAARKNKILEMKAHEPNADESSLNARLVAYASDQAHSSVEKAGLISLVKIKFLPVDDNFSLRGEALQKAIEEDKQQGLVPVFVCATLGTTGVCAFDKLSELGPICAREGLWLHVDAAYAGTAFLRPELRGFLKGIEYADSFTFNPSKWMMVHFDCTGFWVKDKYKLQQTFSVNPIYLRHANSGVATDFMHWQIPLSRRFRSIKLWFVIRSFGVKNLQAHVRHGTDMAKYFESLVRSDPVFEIPAERHLGLVVFRLKGPNCLTESVLKEIAKTGQVFLIPATIQDKLIIRFTVTSQFTTKDDILRDWNLIREAANLVLSQHCTSQPSPRAKNLIPPPVTRDSKDLTNGLSLESVNEGGDDPVQVRKIFRLPGDSLETTMDPFDDCFSEEASDTTKHKLSSFLFSYLSVQNKKKTMRSLSCNSMPMSAQKSPPPDASVKHGGFFRARIFSGFPEEMMMMKKGGFKKLIKFYSVPSFPECSSQCGTLQLPCCPLQAMV</sequence>
<protein>
    <recommendedName>
        <fullName>Histidine decarboxylase</fullName>
        <shortName>HDC</shortName>
        <ecNumber>4.1.1.22</ecNumber>
    </recommendedName>
</protein>
<comment type="function">
    <text evidence="1">Catalyzes the biosynthesis of histamine from histidine.</text>
</comment>
<comment type="catalytic activity">
    <reaction>
        <text>L-histidine + H(+) = histamine + CO2</text>
        <dbReference type="Rhea" id="RHEA:20840"/>
        <dbReference type="ChEBI" id="CHEBI:15378"/>
        <dbReference type="ChEBI" id="CHEBI:16526"/>
        <dbReference type="ChEBI" id="CHEBI:57595"/>
        <dbReference type="ChEBI" id="CHEBI:58432"/>
        <dbReference type="EC" id="4.1.1.22"/>
    </reaction>
</comment>
<comment type="cofactor">
    <cofactor>
        <name>pyridoxal 5'-phosphate</name>
        <dbReference type="ChEBI" id="CHEBI:597326"/>
    </cofactor>
</comment>
<comment type="activity regulation">
    <text>Phosphorylation of brain HDC by cAMP-dependent protein kinase leads to enzyme inactivation.</text>
</comment>
<comment type="pathway">
    <text>Amine and polyamine biosynthesis; histamine biosynthesis; histamine from L-histidine: step 1/1.</text>
</comment>
<comment type="subunit">
    <text>Homodimer.</text>
</comment>
<comment type="alternative products">
    <event type="alternative splicing"/>
    <isoform>
        <id>P16453-1</id>
        <name>1</name>
        <sequence type="displayed"/>
    </isoform>
    <text>A number of isoforms may be produced.</text>
</comment>
<comment type="tissue specificity">
    <text>Brain, glandular regions of the stomach, mast cells and fetal liver.</text>
</comment>
<comment type="PTM">
    <text>May be post-translationally processed.</text>
</comment>
<comment type="miscellaneous">
    <text>A putative trans-splicing which involves HDC and SHBG gene regions produces a fusion protein expressed in fetal liver.</text>
</comment>
<comment type="similarity">
    <text evidence="4">Belongs to the group II decarboxylase family.</text>
</comment>
<comment type="sequence caution" evidence="4">
    <conflict type="erroneous initiation">
        <sequence resource="EMBL-CDS" id="AAA63476"/>
    </conflict>
</comment>
<gene>
    <name type="primary">Hdc</name>
</gene>
<organism>
    <name type="scientific">Rattus norvegicus</name>
    <name type="common">Rat</name>
    <dbReference type="NCBI Taxonomy" id="10116"/>
    <lineage>
        <taxon>Eukaryota</taxon>
        <taxon>Metazoa</taxon>
        <taxon>Chordata</taxon>
        <taxon>Craniata</taxon>
        <taxon>Vertebrata</taxon>
        <taxon>Euteleostomi</taxon>
        <taxon>Mammalia</taxon>
        <taxon>Eutheria</taxon>
        <taxon>Euarchontoglires</taxon>
        <taxon>Glires</taxon>
        <taxon>Rodentia</taxon>
        <taxon>Myomorpha</taxon>
        <taxon>Muroidea</taxon>
        <taxon>Muridae</taxon>
        <taxon>Murinae</taxon>
        <taxon>Rattus</taxon>
    </lineage>
</organism>
<accession>P16453</accession>
<accession>Q63029</accession>
<proteinExistence type="evidence at transcript level"/>